<proteinExistence type="inferred from homology"/>
<keyword id="KW-0687">Ribonucleoprotein</keyword>
<keyword id="KW-0689">Ribosomal protein</keyword>
<sequence length="85" mass="9124">MAHKKAGGSTRNGRDSEAKRLGVKRFGGESVLAGSIIVRQRGTKFHAGANVGCGRDHTLFAKADGKVKFEVKGPKNRKFISIEAE</sequence>
<evidence type="ECO:0000255" key="1">
    <source>
        <dbReference type="HAMAP-Rule" id="MF_00539"/>
    </source>
</evidence>
<evidence type="ECO:0000256" key="2">
    <source>
        <dbReference type="SAM" id="MobiDB-lite"/>
    </source>
</evidence>
<evidence type="ECO:0000305" key="3"/>
<protein>
    <recommendedName>
        <fullName evidence="1">Large ribosomal subunit protein bL27</fullName>
    </recommendedName>
    <alternativeName>
        <fullName evidence="3">50S ribosomal protein L27</fullName>
    </alternativeName>
</protein>
<reference key="1">
    <citation type="journal article" date="2008" name="DNA Res.">
        <title>Complete genome sequence and comparative analysis of the wild-type commensal Escherichia coli strain SE11 isolated from a healthy adult.</title>
        <authorList>
            <person name="Oshima K."/>
            <person name="Toh H."/>
            <person name="Ogura Y."/>
            <person name="Sasamoto H."/>
            <person name="Morita H."/>
            <person name="Park S.-H."/>
            <person name="Ooka T."/>
            <person name="Iyoda S."/>
            <person name="Taylor T.D."/>
            <person name="Hayashi T."/>
            <person name="Itoh K."/>
            <person name="Hattori M."/>
        </authorList>
    </citation>
    <scope>NUCLEOTIDE SEQUENCE [LARGE SCALE GENOMIC DNA]</scope>
    <source>
        <strain>SE11</strain>
    </source>
</reference>
<accession>B6I1Q8</accession>
<name>RL27_ECOSE</name>
<organism>
    <name type="scientific">Escherichia coli (strain SE11)</name>
    <dbReference type="NCBI Taxonomy" id="409438"/>
    <lineage>
        <taxon>Bacteria</taxon>
        <taxon>Pseudomonadati</taxon>
        <taxon>Pseudomonadota</taxon>
        <taxon>Gammaproteobacteria</taxon>
        <taxon>Enterobacterales</taxon>
        <taxon>Enterobacteriaceae</taxon>
        <taxon>Escherichia</taxon>
    </lineage>
</organism>
<feature type="chain" id="PRO_1000128747" description="Large ribosomal subunit protein bL27">
    <location>
        <begin position="1"/>
        <end position="85"/>
    </location>
</feature>
<feature type="region of interest" description="Disordered" evidence="2">
    <location>
        <begin position="1"/>
        <end position="20"/>
    </location>
</feature>
<comment type="similarity">
    <text evidence="1">Belongs to the bacterial ribosomal protein bL27 family.</text>
</comment>
<dbReference type="EMBL" id="AP009240">
    <property type="protein sequence ID" value="BAG78993.1"/>
    <property type="molecule type" value="Genomic_DNA"/>
</dbReference>
<dbReference type="RefSeq" id="WP_000940595.1">
    <property type="nucleotide sequence ID" value="NC_011415.1"/>
</dbReference>
<dbReference type="SMR" id="B6I1Q8"/>
<dbReference type="GeneID" id="93778796"/>
<dbReference type="KEGG" id="ecy:ECSE_3469"/>
<dbReference type="HOGENOM" id="CLU_095424_4_1_6"/>
<dbReference type="Proteomes" id="UP000008199">
    <property type="component" value="Chromosome"/>
</dbReference>
<dbReference type="GO" id="GO:0022625">
    <property type="term" value="C:cytosolic large ribosomal subunit"/>
    <property type="evidence" value="ECO:0007669"/>
    <property type="project" value="TreeGrafter"/>
</dbReference>
<dbReference type="GO" id="GO:0003735">
    <property type="term" value="F:structural constituent of ribosome"/>
    <property type="evidence" value="ECO:0007669"/>
    <property type="project" value="InterPro"/>
</dbReference>
<dbReference type="GO" id="GO:0006412">
    <property type="term" value="P:translation"/>
    <property type="evidence" value="ECO:0007669"/>
    <property type="project" value="UniProtKB-UniRule"/>
</dbReference>
<dbReference type="FunFam" id="2.40.50.100:FF:000001">
    <property type="entry name" value="50S ribosomal protein L27"/>
    <property type="match status" value="1"/>
</dbReference>
<dbReference type="Gene3D" id="2.40.50.100">
    <property type="match status" value="1"/>
</dbReference>
<dbReference type="HAMAP" id="MF_00539">
    <property type="entry name" value="Ribosomal_bL27"/>
    <property type="match status" value="1"/>
</dbReference>
<dbReference type="InterPro" id="IPR001684">
    <property type="entry name" value="Ribosomal_bL27"/>
</dbReference>
<dbReference type="InterPro" id="IPR018261">
    <property type="entry name" value="Ribosomal_bL27_CS"/>
</dbReference>
<dbReference type="NCBIfam" id="TIGR00062">
    <property type="entry name" value="L27"/>
    <property type="match status" value="1"/>
</dbReference>
<dbReference type="PANTHER" id="PTHR15893:SF0">
    <property type="entry name" value="LARGE RIBOSOMAL SUBUNIT PROTEIN BL27M"/>
    <property type="match status" value="1"/>
</dbReference>
<dbReference type="PANTHER" id="PTHR15893">
    <property type="entry name" value="RIBOSOMAL PROTEIN L27"/>
    <property type="match status" value="1"/>
</dbReference>
<dbReference type="Pfam" id="PF01016">
    <property type="entry name" value="Ribosomal_L27"/>
    <property type="match status" value="1"/>
</dbReference>
<dbReference type="PRINTS" id="PR00063">
    <property type="entry name" value="RIBOSOMALL27"/>
</dbReference>
<dbReference type="SUPFAM" id="SSF110324">
    <property type="entry name" value="Ribosomal L27 protein-like"/>
    <property type="match status" value="1"/>
</dbReference>
<dbReference type="PROSITE" id="PS00831">
    <property type="entry name" value="RIBOSOMAL_L27"/>
    <property type="match status" value="1"/>
</dbReference>
<gene>
    <name evidence="1" type="primary">rpmA</name>
    <name type="ordered locus">ECSE_3469</name>
</gene>